<dbReference type="EC" id="2.7.7.27" evidence="1"/>
<dbReference type="EMBL" id="Z11539">
    <property type="protein sequence ID" value="CAA77640.1"/>
    <property type="molecule type" value="Genomic_DNA"/>
</dbReference>
<dbReference type="EMBL" id="BA000019">
    <property type="protein sequence ID" value="BAB76344.1"/>
    <property type="molecule type" value="Genomic_DNA"/>
</dbReference>
<dbReference type="PIR" id="AE2386">
    <property type="entry name" value="AE2386"/>
</dbReference>
<dbReference type="PIR" id="S24991">
    <property type="entry name" value="S24991"/>
</dbReference>
<dbReference type="RefSeq" id="WP_010998776.1">
    <property type="nucleotide sequence ID" value="NZ_RSCN01000020.1"/>
</dbReference>
<dbReference type="SMR" id="P30521"/>
<dbReference type="STRING" id="103690.gene:10496696"/>
<dbReference type="KEGG" id="ana:all4645"/>
<dbReference type="eggNOG" id="COG0448">
    <property type="taxonomic scope" value="Bacteria"/>
</dbReference>
<dbReference type="OrthoDB" id="9801810at2"/>
<dbReference type="BRENDA" id="2.7.7.27">
    <property type="organism ID" value="319"/>
</dbReference>
<dbReference type="UniPathway" id="UPA00164"/>
<dbReference type="Proteomes" id="UP000002483">
    <property type="component" value="Chromosome"/>
</dbReference>
<dbReference type="GO" id="GO:0031470">
    <property type="term" value="C:carboxysome"/>
    <property type="evidence" value="ECO:0007669"/>
    <property type="project" value="UniProtKB-ARBA"/>
</dbReference>
<dbReference type="GO" id="GO:0005524">
    <property type="term" value="F:ATP binding"/>
    <property type="evidence" value="ECO:0007669"/>
    <property type="project" value="UniProtKB-KW"/>
</dbReference>
<dbReference type="GO" id="GO:0008878">
    <property type="term" value="F:glucose-1-phosphate adenylyltransferase activity"/>
    <property type="evidence" value="ECO:0007669"/>
    <property type="project" value="UniProtKB-UniRule"/>
</dbReference>
<dbReference type="GO" id="GO:0043886">
    <property type="term" value="F:structural constituent of carboxysome shell"/>
    <property type="evidence" value="ECO:0007669"/>
    <property type="project" value="UniProtKB-ARBA"/>
</dbReference>
<dbReference type="GO" id="GO:0005978">
    <property type="term" value="P:glycogen biosynthetic process"/>
    <property type="evidence" value="ECO:0007669"/>
    <property type="project" value="UniProtKB-UniRule"/>
</dbReference>
<dbReference type="CDD" id="cd02508">
    <property type="entry name" value="ADP_Glucose_PP"/>
    <property type="match status" value="1"/>
</dbReference>
<dbReference type="CDD" id="cd04651">
    <property type="entry name" value="LbH_G1P_AT_C"/>
    <property type="match status" value="1"/>
</dbReference>
<dbReference type="FunFam" id="3.90.550.10:FF:000030">
    <property type="entry name" value="Glucose-1-phosphate adenylyltransferase"/>
    <property type="match status" value="1"/>
</dbReference>
<dbReference type="Gene3D" id="2.160.10.10">
    <property type="entry name" value="Hexapeptide repeat proteins"/>
    <property type="match status" value="1"/>
</dbReference>
<dbReference type="Gene3D" id="3.90.550.10">
    <property type="entry name" value="Spore Coat Polysaccharide Biosynthesis Protein SpsA, Chain A"/>
    <property type="match status" value="1"/>
</dbReference>
<dbReference type="HAMAP" id="MF_00624">
    <property type="entry name" value="GlgC"/>
    <property type="match status" value="1"/>
</dbReference>
<dbReference type="InterPro" id="IPR011831">
    <property type="entry name" value="ADP-Glc_PPase"/>
</dbReference>
<dbReference type="InterPro" id="IPR005836">
    <property type="entry name" value="ADP_Glu_pyroP_CS"/>
</dbReference>
<dbReference type="InterPro" id="IPR023049">
    <property type="entry name" value="GlgC_bac"/>
</dbReference>
<dbReference type="InterPro" id="IPR005835">
    <property type="entry name" value="NTP_transferase_dom"/>
</dbReference>
<dbReference type="InterPro" id="IPR029044">
    <property type="entry name" value="Nucleotide-diphossugar_trans"/>
</dbReference>
<dbReference type="InterPro" id="IPR011004">
    <property type="entry name" value="Trimer_LpxA-like_sf"/>
</dbReference>
<dbReference type="NCBIfam" id="TIGR02091">
    <property type="entry name" value="glgC"/>
    <property type="match status" value="1"/>
</dbReference>
<dbReference type="NCBIfam" id="NF002772">
    <property type="entry name" value="PRK02862.1"/>
    <property type="match status" value="1"/>
</dbReference>
<dbReference type="PANTHER" id="PTHR43523:SF12">
    <property type="entry name" value="GLUCOSE-1-PHOSPHATE ADENYLYLTRANSFERASE LARGE SUBUNIT 1, CHLOROPLASTIC-RELATED"/>
    <property type="match status" value="1"/>
</dbReference>
<dbReference type="PANTHER" id="PTHR43523">
    <property type="entry name" value="GLUCOSE-1-PHOSPHATE ADENYLYLTRANSFERASE-RELATED"/>
    <property type="match status" value="1"/>
</dbReference>
<dbReference type="Pfam" id="PF25247">
    <property type="entry name" value="LbH_GLGC"/>
    <property type="match status" value="1"/>
</dbReference>
<dbReference type="Pfam" id="PF00483">
    <property type="entry name" value="NTP_transferase"/>
    <property type="match status" value="1"/>
</dbReference>
<dbReference type="SUPFAM" id="SSF53448">
    <property type="entry name" value="Nucleotide-diphospho-sugar transferases"/>
    <property type="match status" value="1"/>
</dbReference>
<dbReference type="SUPFAM" id="SSF51161">
    <property type="entry name" value="Trimeric LpxA-like enzymes"/>
    <property type="match status" value="1"/>
</dbReference>
<dbReference type="PROSITE" id="PS00808">
    <property type="entry name" value="ADP_GLC_PYROPHOSPH_1"/>
    <property type="match status" value="1"/>
</dbReference>
<dbReference type="PROSITE" id="PS00809">
    <property type="entry name" value="ADP_GLC_PYROPHOSPH_2"/>
    <property type="match status" value="1"/>
</dbReference>
<dbReference type="PROSITE" id="PS00810">
    <property type="entry name" value="ADP_GLC_PYROPHOSPH_3"/>
    <property type="match status" value="1"/>
</dbReference>
<proteinExistence type="inferred from homology"/>
<protein>
    <recommendedName>
        <fullName evidence="1">Glucose-1-phosphate adenylyltransferase</fullName>
        <ecNumber evidence="1">2.7.7.27</ecNumber>
    </recommendedName>
    <alternativeName>
        <fullName evidence="1">ADP-glucose pyrophosphorylase</fullName>
        <shortName evidence="1">ADPGlc PPase</shortName>
    </alternativeName>
    <alternativeName>
        <fullName evidence="1">ADP-glucose synthase</fullName>
    </alternativeName>
</protein>
<feature type="chain" id="PRO_0000195273" description="Glucose-1-phosphate adenylyltransferase">
    <location>
        <begin position="1"/>
        <end position="429"/>
    </location>
</feature>
<feature type="binding site" evidence="1">
    <location>
        <position position="162"/>
    </location>
    <ligand>
        <name>alpha-D-glucose 1-phosphate</name>
        <dbReference type="ChEBI" id="CHEBI:58601"/>
    </ligand>
</feature>
<feature type="binding site" evidence="1">
    <location>
        <begin position="177"/>
        <end position="178"/>
    </location>
    <ligand>
        <name>alpha-D-glucose 1-phosphate</name>
        <dbReference type="ChEBI" id="CHEBI:58601"/>
    </ligand>
</feature>
<feature type="binding site" evidence="1">
    <location>
        <position position="209"/>
    </location>
    <ligand>
        <name>alpha-D-glucose 1-phosphate</name>
        <dbReference type="ChEBI" id="CHEBI:58601"/>
    </ligand>
</feature>
<name>GLGC_NOSS1</name>
<gene>
    <name evidence="1" type="primary">glgC</name>
    <name type="synonym">agp</name>
    <name type="ordered locus">all4645</name>
</gene>
<reference key="1">
    <citation type="journal article" date="1992" name="Plant Mol. Biol.">
        <title>Molecular cloning and expression of the gene encoding ADP-glucose pyrophosphorylase from the cyanobacterium Anabaena sp. strain PCC 7120.</title>
        <authorList>
            <person name="Charng Y."/>
            <person name="Kakefuda G."/>
            <person name="Iglesias A.A."/>
            <person name="Buikema W.J."/>
            <person name="Preiss J."/>
        </authorList>
    </citation>
    <scope>NUCLEOTIDE SEQUENCE [GENOMIC DNA]</scope>
    <scope>FUNCTION</scope>
    <scope>ACTIVITY REGULATION</scope>
</reference>
<reference key="2">
    <citation type="journal article" date="2001" name="DNA Res.">
        <title>Complete genomic sequence of the filamentous nitrogen-fixing cyanobacterium Anabaena sp. strain PCC 7120.</title>
        <authorList>
            <person name="Kaneko T."/>
            <person name="Nakamura Y."/>
            <person name="Wolk C.P."/>
            <person name="Kuritz T."/>
            <person name="Sasamoto S."/>
            <person name="Watanabe A."/>
            <person name="Iriguchi M."/>
            <person name="Ishikawa A."/>
            <person name="Kawashima K."/>
            <person name="Kimura T."/>
            <person name="Kishida Y."/>
            <person name="Kohara M."/>
            <person name="Matsumoto M."/>
            <person name="Matsuno A."/>
            <person name="Muraki A."/>
            <person name="Nakazaki N."/>
            <person name="Shimpo S."/>
            <person name="Sugimoto M."/>
            <person name="Takazawa M."/>
            <person name="Yamada M."/>
            <person name="Yasuda M."/>
            <person name="Tabata S."/>
        </authorList>
    </citation>
    <scope>NUCLEOTIDE SEQUENCE [LARGE SCALE GENOMIC DNA]</scope>
    <source>
        <strain>PCC 7120 / SAG 25.82 / UTEX 2576</strain>
    </source>
</reference>
<sequence>MKKVLAIILGGGAGTRLYPLTKLRAKPAVPVAGKYRLIDIPVSNCINSEIFKIYVLTQFNSASLNRHIARTYNFSGFSEGFVEVLAAQQTPENPNWFQGTADAVRQYLWMLQEWDVDEFLILSGDHLYRMDYRLFIQRHRETNADITLSVIPIDDRRASDFGLMKIDNSGRVIDFSEKPKGEALTKMRVDTTVLGLTPEQAASQPYIASMGIYVFKKDVLIKLLKEALERTDFGKEIIPDAAKDHNVQAYLFDDYWEDIGTIEAFYNANLALTQQPMPPFSFYDEEAPIYTRARYLPPTKLLDCHVTESIIGEGCILKNCRIQHSVLGVRSRIETGCMIEESLLMGADFYQASVERQCSIDKGDIPVGIGPDTIIRRAIIDKNARIGHDVKIINKDNVQEADRESQGFYIRSGIVVVLKNAVITDGTII</sequence>
<comment type="function">
    <text evidence="1 3">Involved in the biosynthesis of ADP-glucose, a building block required for the elongation reactions to produce glycogen. Catalyzes the reaction between ATP and alpha-D-glucose 1-phosphate (G1P) to produce pyrophosphate and ADP-Glc.</text>
</comment>
<comment type="catalytic activity">
    <reaction evidence="1">
        <text>alpha-D-glucose 1-phosphate + ATP + H(+) = ADP-alpha-D-glucose + diphosphate</text>
        <dbReference type="Rhea" id="RHEA:12120"/>
        <dbReference type="ChEBI" id="CHEBI:15378"/>
        <dbReference type="ChEBI" id="CHEBI:30616"/>
        <dbReference type="ChEBI" id="CHEBI:33019"/>
        <dbReference type="ChEBI" id="CHEBI:57498"/>
        <dbReference type="ChEBI" id="CHEBI:58601"/>
        <dbReference type="EC" id="2.7.7.27"/>
    </reaction>
</comment>
<comment type="activity regulation">
    <text evidence="2">Activated by 3-phosphoglycerate and inhibited by phosphate.</text>
</comment>
<comment type="pathway">
    <text evidence="1">Glycan biosynthesis; glycogen biosynthesis.</text>
</comment>
<comment type="subunit">
    <text evidence="1">Homotetramer.</text>
</comment>
<comment type="similarity">
    <text evidence="1">Belongs to the bacterial/plant glucose-1-phosphate adenylyltransferase family.</text>
</comment>
<evidence type="ECO:0000255" key="1">
    <source>
        <dbReference type="HAMAP-Rule" id="MF_00624"/>
    </source>
</evidence>
<evidence type="ECO:0000269" key="2">
    <source>
    </source>
</evidence>
<evidence type="ECO:0000305" key="3">
    <source>
    </source>
</evidence>
<organism>
    <name type="scientific">Nostoc sp. (strain PCC 7120 / SAG 25.82 / UTEX 2576)</name>
    <dbReference type="NCBI Taxonomy" id="103690"/>
    <lineage>
        <taxon>Bacteria</taxon>
        <taxon>Bacillati</taxon>
        <taxon>Cyanobacteriota</taxon>
        <taxon>Cyanophyceae</taxon>
        <taxon>Nostocales</taxon>
        <taxon>Nostocaceae</taxon>
        <taxon>Nostoc</taxon>
    </lineage>
</organism>
<accession>P30521</accession>
<keyword id="KW-0067">ATP-binding</keyword>
<keyword id="KW-0119">Carbohydrate metabolism</keyword>
<keyword id="KW-0320">Glycogen biosynthesis</keyword>
<keyword id="KW-0321">Glycogen metabolism</keyword>
<keyword id="KW-0547">Nucleotide-binding</keyword>
<keyword id="KW-0548">Nucleotidyltransferase</keyword>
<keyword id="KW-1185">Reference proteome</keyword>
<keyword id="KW-0808">Transferase</keyword>